<reference key="1">
    <citation type="journal article" date="1995" name="FEBS Lett.">
        <title>A new family of lipolytic plant enzymes with members in rice, arabidopsis and maize.</title>
        <authorList>
            <person name="Brick D.J."/>
            <person name="Brumlik M.J."/>
            <person name="Buckley J.T."/>
            <person name="Cao J.X."/>
            <person name="Davies P.C."/>
            <person name="Misra S."/>
            <person name="Tranbarger T.J."/>
            <person name="Upton C."/>
        </authorList>
    </citation>
    <scope>NUCLEOTIDE SEQUENCE [MRNA]</scope>
</reference>
<reference key="2">
    <citation type="journal article" date="2000" name="Nature">
        <title>Sequence and analysis of chromosome 1 of the plant Arabidopsis thaliana.</title>
        <authorList>
            <person name="Theologis A."/>
            <person name="Ecker J.R."/>
            <person name="Palm C.J."/>
            <person name="Federspiel N.A."/>
            <person name="Kaul S."/>
            <person name="White O."/>
            <person name="Alonso J."/>
            <person name="Altafi H."/>
            <person name="Araujo R."/>
            <person name="Bowman C.L."/>
            <person name="Brooks S.Y."/>
            <person name="Buehler E."/>
            <person name="Chan A."/>
            <person name="Chao Q."/>
            <person name="Chen H."/>
            <person name="Cheuk R.F."/>
            <person name="Chin C.W."/>
            <person name="Chung M.K."/>
            <person name="Conn L."/>
            <person name="Conway A.B."/>
            <person name="Conway A.R."/>
            <person name="Creasy T.H."/>
            <person name="Dewar K."/>
            <person name="Dunn P."/>
            <person name="Etgu P."/>
            <person name="Feldblyum T.V."/>
            <person name="Feng J.-D."/>
            <person name="Fong B."/>
            <person name="Fujii C.Y."/>
            <person name="Gill J.E."/>
            <person name="Goldsmith A.D."/>
            <person name="Haas B."/>
            <person name="Hansen N.F."/>
            <person name="Hughes B."/>
            <person name="Huizar L."/>
            <person name="Hunter J.L."/>
            <person name="Jenkins J."/>
            <person name="Johnson-Hopson C."/>
            <person name="Khan S."/>
            <person name="Khaykin E."/>
            <person name="Kim C.J."/>
            <person name="Koo H.L."/>
            <person name="Kremenetskaia I."/>
            <person name="Kurtz D.B."/>
            <person name="Kwan A."/>
            <person name="Lam B."/>
            <person name="Langin-Hooper S."/>
            <person name="Lee A."/>
            <person name="Lee J.M."/>
            <person name="Lenz C.A."/>
            <person name="Li J.H."/>
            <person name="Li Y.-P."/>
            <person name="Lin X."/>
            <person name="Liu S.X."/>
            <person name="Liu Z.A."/>
            <person name="Luros J.S."/>
            <person name="Maiti R."/>
            <person name="Marziali A."/>
            <person name="Militscher J."/>
            <person name="Miranda M."/>
            <person name="Nguyen M."/>
            <person name="Nierman W.C."/>
            <person name="Osborne B.I."/>
            <person name="Pai G."/>
            <person name="Peterson J."/>
            <person name="Pham P.K."/>
            <person name="Rizzo M."/>
            <person name="Rooney T."/>
            <person name="Rowley D."/>
            <person name="Sakano H."/>
            <person name="Salzberg S.L."/>
            <person name="Schwartz J.R."/>
            <person name="Shinn P."/>
            <person name="Southwick A.M."/>
            <person name="Sun H."/>
            <person name="Tallon L.J."/>
            <person name="Tambunga G."/>
            <person name="Toriumi M.J."/>
            <person name="Town C.D."/>
            <person name="Utterback T."/>
            <person name="Van Aken S."/>
            <person name="Vaysberg M."/>
            <person name="Vysotskaia V.S."/>
            <person name="Walker M."/>
            <person name="Wu D."/>
            <person name="Yu G."/>
            <person name="Fraser C.M."/>
            <person name="Venter J.C."/>
            <person name="Davis R.W."/>
        </authorList>
    </citation>
    <scope>NUCLEOTIDE SEQUENCE [LARGE SCALE GENOMIC DNA]</scope>
    <source>
        <strain>cv. Columbia</strain>
    </source>
</reference>
<reference key="3">
    <citation type="journal article" date="2017" name="Plant J.">
        <title>Araport11: a complete reannotation of the Arabidopsis thaliana reference genome.</title>
        <authorList>
            <person name="Cheng C.Y."/>
            <person name="Krishnakumar V."/>
            <person name="Chan A.P."/>
            <person name="Thibaud-Nissen F."/>
            <person name="Schobel S."/>
            <person name="Town C.D."/>
        </authorList>
    </citation>
    <scope>GENOME REANNOTATION</scope>
    <source>
        <strain>cv. Columbia</strain>
    </source>
</reference>
<reference key="4">
    <citation type="journal article" date="2002" name="Science">
        <title>Functional annotation of a full-length Arabidopsis cDNA collection.</title>
        <authorList>
            <person name="Seki M."/>
            <person name="Narusaka M."/>
            <person name="Kamiya A."/>
            <person name="Ishida J."/>
            <person name="Satou M."/>
            <person name="Sakurai T."/>
            <person name="Nakajima M."/>
            <person name="Enju A."/>
            <person name="Akiyama K."/>
            <person name="Oono Y."/>
            <person name="Muramatsu M."/>
            <person name="Hayashizaki Y."/>
            <person name="Kawai J."/>
            <person name="Carninci P."/>
            <person name="Itoh M."/>
            <person name="Ishii Y."/>
            <person name="Arakawa T."/>
            <person name="Shibata K."/>
            <person name="Shinagawa A."/>
            <person name="Shinozaki K."/>
        </authorList>
    </citation>
    <scope>NUCLEOTIDE SEQUENCE [LARGE SCALE MRNA]</scope>
    <source>
        <strain>cv. Columbia</strain>
    </source>
</reference>
<reference key="5">
    <citation type="journal article" date="2004" name="Prog. Lipid Res.">
        <title>GDSL family of serine esterases/lipases.</title>
        <authorList>
            <person name="Akoh C.C."/>
            <person name="Lee G.-C."/>
            <person name="Liaw Y.-C."/>
            <person name="Huang T.-H."/>
            <person name="Shaw J.-F."/>
        </authorList>
    </citation>
    <scope>REVIEW</scope>
</reference>
<reference key="6">
    <citation type="journal article" date="2008" name="Pak. J. Biol. Sci.">
        <title>Sequence analysis of GDSL lipase gene family in Arabidopsis thaliana.</title>
        <authorList>
            <person name="Ling H."/>
        </authorList>
    </citation>
    <scope>GENE FAMILY</scope>
</reference>
<comment type="subcellular location">
    <subcellularLocation>
        <location evidence="3">Secreted</location>
    </subcellularLocation>
</comment>
<comment type="similarity">
    <text evidence="3">Belongs to the 'GDSL' lipolytic enzyme family.</text>
</comment>
<comment type="sequence caution" evidence="3">
    <conflict type="erroneous gene model prediction">
        <sequence resource="EMBL-CDS" id="AAF24544"/>
    </conflict>
    <text>The predicted gene has been split into 4 genes: At1g28640, At1g28650, At1g28660 and At1g28670.</text>
</comment>
<name>GDL13_ARATH</name>
<organism>
    <name type="scientific">Arabidopsis thaliana</name>
    <name type="common">Mouse-ear cress</name>
    <dbReference type="NCBI Taxonomy" id="3702"/>
    <lineage>
        <taxon>Eukaryota</taxon>
        <taxon>Viridiplantae</taxon>
        <taxon>Streptophyta</taxon>
        <taxon>Embryophyta</taxon>
        <taxon>Tracheophyta</taxon>
        <taxon>Spermatophyta</taxon>
        <taxon>Magnoliopsida</taxon>
        <taxon>eudicotyledons</taxon>
        <taxon>Gunneridae</taxon>
        <taxon>Pentapetalae</taxon>
        <taxon>rosids</taxon>
        <taxon>malvids</taxon>
        <taxon>Brassicales</taxon>
        <taxon>Brassicaceae</taxon>
        <taxon>Camelineae</taxon>
        <taxon>Arabidopsis</taxon>
    </lineage>
</organism>
<keyword id="KW-0325">Glycoprotein</keyword>
<keyword id="KW-0378">Hydrolase</keyword>
<keyword id="KW-0442">Lipid degradation</keyword>
<keyword id="KW-0443">Lipid metabolism</keyword>
<keyword id="KW-1185">Reference proteome</keyword>
<keyword id="KW-0964">Secreted</keyword>
<keyword id="KW-0732">Signal</keyword>
<feature type="signal peptide" evidence="2">
    <location>
        <begin position="1"/>
        <end position="24"/>
    </location>
</feature>
<feature type="chain" id="PRO_0000367355" description="GDSL esterase/lipase At1g28670">
    <location>
        <begin position="25"/>
        <end position="384"/>
    </location>
</feature>
<feature type="active site" description="Nucleophile" evidence="1">
    <location>
        <position position="42"/>
    </location>
</feature>
<feature type="active site" evidence="1">
    <location>
        <position position="346"/>
    </location>
</feature>
<feature type="active site" evidence="1">
    <location>
        <position position="349"/>
    </location>
</feature>
<feature type="glycosylation site" description="N-linked (GlcNAc...) asparagine" evidence="2">
    <location>
        <position position="105"/>
    </location>
</feature>
<feature type="glycosylation site" description="N-linked (GlcNAc...) asparagine" evidence="2">
    <location>
        <position position="138"/>
    </location>
</feature>
<feature type="glycosylation site" description="N-linked (GlcNAc...) asparagine" evidence="2">
    <location>
        <position position="321"/>
    </location>
</feature>
<dbReference type="EC" id="3.1.1.-"/>
<dbReference type="EMBL" id="U38916">
    <property type="protein sequence ID" value="AAA93262.1"/>
    <property type="molecule type" value="mRNA"/>
</dbReference>
<dbReference type="EMBL" id="AC007508">
    <property type="protein sequence ID" value="AAF24544.2"/>
    <property type="status" value="ALT_SEQ"/>
    <property type="molecule type" value="Genomic_DNA"/>
</dbReference>
<dbReference type="EMBL" id="CP002684">
    <property type="protein sequence ID" value="AEE31012.1"/>
    <property type="molecule type" value="Genomic_DNA"/>
</dbReference>
<dbReference type="EMBL" id="AK118766">
    <property type="protein sequence ID" value="BAC43359.1"/>
    <property type="molecule type" value="mRNA"/>
</dbReference>
<dbReference type="PIR" id="S68410">
    <property type="entry name" value="S68410"/>
</dbReference>
<dbReference type="SMR" id="Q38894"/>
<dbReference type="FunCoup" id="Q38894">
    <property type="interactions" value="104"/>
</dbReference>
<dbReference type="IntAct" id="Q38894">
    <property type="interactions" value="1"/>
</dbReference>
<dbReference type="STRING" id="3702.Q38894"/>
<dbReference type="GlyGen" id="Q38894">
    <property type="glycosylation" value="4 sites"/>
</dbReference>
<dbReference type="PaxDb" id="3702-AT1G28670.1"/>
<dbReference type="ProteomicsDB" id="224749"/>
<dbReference type="EnsemblPlants" id="AT1G28670.1">
    <property type="protein sequence ID" value="AT1G28670.1"/>
    <property type="gene ID" value="AT1G28670"/>
</dbReference>
<dbReference type="Gramene" id="AT1G28670.1">
    <property type="protein sequence ID" value="AT1G28670.1"/>
    <property type="gene ID" value="AT1G28670"/>
</dbReference>
<dbReference type="KEGG" id="ath:AT1G28670"/>
<dbReference type="Araport" id="AT1G28670"/>
<dbReference type="TAIR" id="AT1G28670">
    <property type="gene designation" value="ARAB-1"/>
</dbReference>
<dbReference type="eggNOG" id="ENOG502QSMM">
    <property type="taxonomic scope" value="Eukaryota"/>
</dbReference>
<dbReference type="HOGENOM" id="CLU_015101_2_1_1"/>
<dbReference type="InParanoid" id="Q38894"/>
<dbReference type="OMA" id="SSHDCRK"/>
<dbReference type="PhylomeDB" id="Q38894"/>
<dbReference type="BioCyc" id="ARA:AT1G28670-MONOMER"/>
<dbReference type="BRENDA" id="3.1.1.49">
    <property type="organism ID" value="399"/>
</dbReference>
<dbReference type="PRO" id="PR:Q38894"/>
<dbReference type="Proteomes" id="UP000006548">
    <property type="component" value="Chromosome 1"/>
</dbReference>
<dbReference type="ExpressionAtlas" id="Q38894">
    <property type="expression patterns" value="baseline and differential"/>
</dbReference>
<dbReference type="GO" id="GO:0005576">
    <property type="term" value="C:extracellular region"/>
    <property type="evidence" value="ECO:0007669"/>
    <property type="project" value="UniProtKB-SubCell"/>
</dbReference>
<dbReference type="GO" id="GO:0016788">
    <property type="term" value="F:hydrolase activity, acting on ester bonds"/>
    <property type="evidence" value="ECO:0007669"/>
    <property type="project" value="InterPro"/>
</dbReference>
<dbReference type="GO" id="GO:0016042">
    <property type="term" value="P:lipid catabolic process"/>
    <property type="evidence" value="ECO:0007669"/>
    <property type="project" value="UniProtKB-KW"/>
</dbReference>
<dbReference type="CDD" id="cd01837">
    <property type="entry name" value="SGNH_plant_lipase_like"/>
    <property type="match status" value="1"/>
</dbReference>
<dbReference type="Gene3D" id="3.40.50.1110">
    <property type="entry name" value="SGNH hydrolase"/>
    <property type="match status" value="1"/>
</dbReference>
<dbReference type="InterPro" id="IPR001087">
    <property type="entry name" value="GDSL"/>
</dbReference>
<dbReference type="InterPro" id="IPR036514">
    <property type="entry name" value="SGNH_hydro_sf"/>
</dbReference>
<dbReference type="InterPro" id="IPR035669">
    <property type="entry name" value="SGNH_plant_lipase-like"/>
</dbReference>
<dbReference type="PANTHER" id="PTHR22835:SF543">
    <property type="entry name" value="GENOME ASSEMBLY, CHROMOSOME: A07"/>
    <property type="match status" value="1"/>
</dbReference>
<dbReference type="PANTHER" id="PTHR22835">
    <property type="entry name" value="ZINC FINGER FYVE DOMAIN CONTAINING PROTEIN"/>
    <property type="match status" value="1"/>
</dbReference>
<dbReference type="Pfam" id="PF00657">
    <property type="entry name" value="Lipase_GDSL"/>
    <property type="match status" value="1"/>
</dbReference>
<dbReference type="SUPFAM" id="SSF52266">
    <property type="entry name" value="SGNH hydrolase"/>
    <property type="match status" value="1"/>
</dbReference>
<evidence type="ECO:0000250" key="1"/>
<evidence type="ECO:0000255" key="2"/>
<evidence type="ECO:0000305" key="3"/>
<accession>Q38894</accession>
<accession>Q9SHP9</accession>
<accession>Q9SHQ1</accession>
<sequence length="384" mass="42427">MASSLKKLISSFLLVLYSTTIIVASSESRCRRFKSIISFGDSIADTGNYLHLSDVNHLPQSAFLPYGESFFHPPSGRASNGRLIIDFIAEFLGLPYVPPYFGSQNVSFEQGINFAVYGATALDRAFLLGKGIESDFTNVSLSVQLDTFKQILPNLCASSTRDCKEMLGDSLILMGEIGGNDYNYPFFEGKSINEIKELVPLIVKAISSAIVDLIDLGGKTFLVPGGFPTGCSAAYLTLFQTVAEKDQDPLTGCYPLLNEFGEHHNEQLKTELKRLQKFYPHVNIIYADYHNSLYRFYQEPAKYGFKNKPLAACCGVGGKYNFTIGKECGYEGVNYCQNPSEYVNWDGYHLTEAAYQKMTEGILNGPYATPAFDWSCLGSGTVDT</sequence>
<protein>
    <recommendedName>
        <fullName>GDSL esterase/lipase At1g28670</fullName>
        <ecNumber>3.1.1.-</ecNumber>
    </recommendedName>
    <alternativeName>
        <fullName>Extracellular lipase At1g28670</fullName>
    </alternativeName>
</protein>
<proteinExistence type="evidence at transcript level"/>
<gene>
    <name type="ordered locus">At1g28670</name>
    <name type="ORF">F1K23.13</name>
</gene>